<protein>
    <recommendedName>
        <fullName evidence="1">3-hydroxydecanoyl-[acyl-carrier-protein] dehydratase</fullName>
        <ecNumber evidence="1">4.2.1.59</ecNumber>
    </recommendedName>
    <alternativeName>
        <fullName evidence="1">3-hydroxyacyl-[acyl-carrier-protein] dehydratase FabA</fullName>
    </alternativeName>
    <alternativeName>
        <fullName evidence="1">Beta-hydroxydecanoyl thioester dehydrase</fullName>
    </alternativeName>
    <alternativeName>
        <fullName evidence="1">Trans-2-decenoyl-[acyl-carrier-protein] isomerase</fullName>
        <ecNumber evidence="1">5.3.3.14</ecNumber>
    </alternativeName>
</protein>
<sequence>MVDKRESYTKEDLLASGRGELFGAKGPQLPAPNMLMMDRVVKMTETGGNFDKGYVEAELDINPDLWFFGCHFIGDPVMPGCLGLDAMWQLVGFYLGWLGGEGKGRALGVGEVKFTGQVLPTAKKVTYRIHFKRIVNRRLIMGLADGEVLVDGRLIYTASDLKVGLFQDTSAF</sequence>
<feature type="chain" id="PRO_1000060822" description="3-hydroxydecanoyl-[acyl-carrier-protein] dehydratase">
    <location>
        <begin position="1"/>
        <end position="172"/>
    </location>
</feature>
<feature type="active site" evidence="1">
    <location>
        <position position="71"/>
    </location>
</feature>
<proteinExistence type="inferred from homology"/>
<accession>A7ZYQ6</accession>
<name>FABA_ECOHS</name>
<evidence type="ECO:0000255" key="1">
    <source>
        <dbReference type="HAMAP-Rule" id="MF_00405"/>
    </source>
</evidence>
<reference key="1">
    <citation type="journal article" date="2008" name="J. Bacteriol.">
        <title>The pangenome structure of Escherichia coli: comparative genomic analysis of E. coli commensal and pathogenic isolates.</title>
        <authorList>
            <person name="Rasko D.A."/>
            <person name="Rosovitz M.J."/>
            <person name="Myers G.S.A."/>
            <person name="Mongodin E.F."/>
            <person name="Fricke W.F."/>
            <person name="Gajer P."/>
            <person name="Crabtree J."/>
            <person name="Sebaihia M."/>
            <person name="Thomson N.R."/>
            <person name="Chaudhuri R."/>
            <person name="Henderson I.R."/>
            <person name="Sperandio V."/>
            <person name="Ravel J."/>
        </authorList>
    </citation>
    <scope>NUCLEOTIDE SEQUENCE [LARGE SCALE GENOMIC DNA]</scope>
    <source>
        <strain>HS</strain>
    </source>
</reference>
<dbReference type="EC" id="4.2.1.59" evidence="1"/>
<dbReference type="EC" id="5.3.3.14" evidence="1"/>
<dbReference type="EMBL" id="CP000802">
    <property type="protein sequence ID" value="ABV05410.1"/>
    <property type="molecule type" value="Genomic_DNA"/>
</dbReference>
<dbReference type="RefSeq" id="WP_000227927.1">
    <property type="nucleotide sequence ID" value="NC_009800.1"/>
</dbReference>
<dbReference type="SMR" id="A7ZYQ6"/>
<dbReference type="GeneID" id="93776460"/>
<dbReference type="KEGG" id="ecx:EcHS_A1063"/>
<dbReference type="HOGENOM" id="CLU_097925_0_0_6"/>
<dbReference type="UniPathway" id="UPA00094"/>
<dbReference type="GO" id="GO:0005737">
    <property type="term" value="C:cytoplasm"/>
    <property type="evidence" value="ECO:0007669"/>
    <property type="project" value="UniProtKB-SubCell"/>
</dbReference>
<dbReference type="GO" id="GO:0019171">
    <property type="term" value="F:(3R)-hydroxyacyl-[acyl-carrier-protein] dehydratase activity"/>
    <property type="evidence" value="ECO:0007669"/>
    <property type="project" value="UniProtKB-UniRule"/>
</dbReference>
<dbReference type="GO" id="GO:0034017">
    <property type="term" value="F:trans-2-decenoyl-acyl-carrier-protein isomerase activity"/>
    <property type="evidence" value="ECO:0007669"/>
    <property type="project" value="UniProtKB-UniRule"/>
</dbReference>
<dbReference type="GO" id="GO:0006636">
    <property type="term" value="P:unsaturated fatty acid biosynthetic process"/>
    <property type="evidence" value="ECO:0007669"/>
    <property type="project" value="UniProtKB-UniRule"/>
</dbReference>
<dbReference type="CDD" id="cd01287">
    <property type="entry name" value="FabA"/>
    <property type="match status" value="1"/>
</dbReference>
<dbReference type="FunFam" id="3.10.129.10:FF:000003">
    <property type="entry name" value="3-hydroxydecanoyl-[acyl-carrier-protein] dehydratase"/>
    <property type="match status" value="1"/>
</dbReference>
<dbReference type="Gene3D" id="3.10.129.10">
    <property type="entry name" value="Hotdog Thioesterase"/>
    <property type="match status" value="1"/>
</dbReference>
<dbReference type="HAMAP" id="MF_00405">
    <property type="entry name" value="FabA"/>
    <property type="match status" value="1"/>
</dbReference>
<dbReference type="InterPro" id="IPR010083">
    <property type="entry name" value="FabA"/>
</dbReference>
<dbReference type="InterPro" id="IPR013114">
    <property type="entry name" value="FabA_FabZ"/>
</dbReference>
<dbReference type="InterPro" id="IPR029069">
    <property type="entry name" value="HotDog_dom_sf"/>
</dbReference>
<dbReference type="NCBIfam" id="TIGR01749">
    <property type="entry name" value="fabA"/>
    <property type="match status" value="1"/>
</dbReference>
<dbReference type="NCBIfam" id="NF003509">
    <property type="entry name" value="PRK05174.1"/>
    <property type="match status" value="1"/>
</dbReference>
<dbReference type="PANTHER" id="PTHR30272">
    <property type="entry name" value="3-HYDROXYACYL-[ACYL-CARRIER-PROTEIN] DEHYDRATASE"/>
    <property type="match status" value="1"/>
</dbReference>
<dbReference type="PANTHER" id="PTHR30272:SF8">
    <property type="entry name" value="3-HYDROXYDECANOYL-[ACYL-CARRIER-PROTEIN] DEHYDRATASE"/>
    <property type="match status" value="1"/>
</dbReference>
<dbReference type="Pfam" id="PF07977">
    <property type="entry name" value="FabA"/>
    <property type="match status" value="1"/>
</dbReference>
<dbReference type="SUPFAM" id="SSF54637">
    <property type="entry name" value="Thioesterase/thiol ester dehydrase-isomerase"/>
    <property type="match status" value="1"/>
</dbReference>
<comment type="function">
    <text evidence="1">Necessary for the introduction of cis unsaturation into fatty acids. Catalyzes the dehydration of (3R)-3-hydroxydecanoyl-ACP to E-(2)-decenoyl-ACP and then its isomerization to Z-(3)-decenoyl-ACP. Can catalyze the dehydratase reaction for beta-hydroxyacyl-ACPs with saturated chain lengths up to 16:0, being most active on intermediate chain length.</text>
</comment>
<comment type="catalytic activity">
    <reaction evidence="1">
        <text>a (3R)-hydroxyacyl-[ACP] = a (2E)-enoyl-[ACP] + H2O</text>
        <dbReference type="Rhea" id="RHEA:13097"/>
        <dbReference type="Rhea" id="RHEA-COMP:9925"/>
        <dbReference type="Rhea" id="RHEA-COMP:9945"/>
        <dbReference type="ChEBI" id="CHEBI:15377"/>
        <dbReference type="ChEBI" id="CHEBI:78784"/>
        <dbReference type="ChEBI" id="CHEBI:78827"/>
        <dbReference type="EC" id="4.2.1.59"/>
    </reaction>
</comment>
<comment type="catalytic activity">
    <reaction evidence="1">
        <text>(3R)-hydroxydecanoyl-[ACP] = (2E)-decenoyl-[ACP] + H2O</text>
        <dbReference type="Rhea" id="RHEA:41860"/>
        <dbReference type="Rhea" id="RHEA-COMP:9638"/>
        <dbReference type="Rhea" id="RHEA-COMP:9639"/>
        <dbReference type="ChEBI" id="CHEBI:15377"/>
        <dbReference type="ChEBI" id="CHEBI:78466"/>
        <dbReference type="ChEBI" id="CHEBI:78467"/>
    </reaction>
</comment>
<comment type="catalytic activity">
    <reaction evidence="1">
        <text>(2E)-decenoyl-[ACP] = (3Z)-decenoyl-[ACP]</text>
        <dbReference type="Rhea" id="RHEA:23568"/>
        <dbReference type="Rhea" id="RHEA-COMP:9639"/>
        <dbReference type="Rhea" id="RHEA-COMP:9927"/>
        <dbReference type="ChEBI" id="CHEBI:78467"/>
        <dbReference type="ChEBI" id="CHEBI:78798"/>
        <dbReference type="EC" id="5.3.3.14"/>
    </reaction>
</comment>
<comment type="pathway">
    <text evidence="1">Lipid metabolism; fatty acid biosynthesis.</text>
</comment>
<comment type="subunit">
    <text evidence="1">Homodimer.</text>
</comment>
<comment type="subcellular location">
    <subcellularLocation>
        <location evidence="1">Cytoplasm</location>
    </subcellularLocation>
</comment>
<comment type="similarity">
    <text evidence="1">Belongs to the thioester dehydratase family. FabA subfamily.</text>
</comment>
<organism>
    <name type="scientific">Escherichia coli O9:H4 (strain HS)</name>
    <dbReference type="NCBI Taxonomy" id="331112"/>
    <lineage>
        <taxon>Bacteria</taxon>
        <taxon>Pseudomonadati</taxon>
        <taxon>Pseudomonadota</taxon>
        <taxon>Gammaproteobacteria</taxon>
        <taxon>Enterobacterales</taxon>
        <taxon>Enterobacteriaceae</taxon>
        <taxon>Escherichia</taxon>
    </lineage>
</organism>
<gene>
    <name evidence="1" type="primary">fabA</name>
    <name type="ordered locus">EcHS_A1063</name>
</gene>
<keyword id="KW-0963">Cytoplasm</keyword>
<keyword id="KW-0275">Fatty acid biosynthesis</keyword>
<keyword id="KW-0276">Fatty acid metabolism</keyword>
<keyword id="KW-0413">Isomerase</keyword>
<keyword id="KW-0444">Lipid biosynthesis</keyword>
<keyword id="KW-0443">Lipid metabolism</keyword>
<keyword id="KW-0456">Lyase</keyword>